<evidence type="ECO:0000255" key="1">
    <source>
        <dbReference type="HAMAP-Rule" id="MF_00006"/>
    </source>
</evidence>
<accession>Q2LT96</accession>
<sequence>MKDSTEKSKPWGGRFQEPTNELVEAFTASISFDRRLYRYDIEGSIAHARMLVRQEIINRKEGFAIVEGLKEIQRDIETGSFEFSPGDEDIHMAIEKDLIRRIGDAGAKLHTGRSRNDQVALDVRLYLRAEIKEILEFMKVLKGAFLELAKKEAETILPGYTHLQKAQPVLLAHYLLAWREMLDRDESRLRDCYRRVNVLPLGAAALAGTSLPIDRAYVARLLKFPEISRNSMDTVSDRDFVAEFLFASSLIMMHLSRFCEDLILWSSGEFNFVEISDAFTTGSSIMPQKKNPDVAELIRGKTGRVYGNLIALLTLLKGLPMTYNRDLQEDKEPLFDTVDTVKACLQILAEMIRNMKFNREKMRQEAEGGFSTATDLAEYLVMKGIPFREAHGIVGKLVSFCIECKKELAQLSMEEFQRFCPVINEDIHDRLSVSNSVRSRKSYGGTACRQVMEQIRQIEEGAYPSTRRRKEA</sequence>
<protein>
    <recommendedName>
        <fullName evidence="1">Argininosuccinate lyase</fullName>
        <shortName evidence="1">ASAL</shortName>
        <ecNumber evidence="1">4.3.2.1</ecNumber>
    </recommendedName>
    <alternativeName>
        <fullName evidence="1">Arginosuccinase</fullName>
    </alternativeName>
</protein>
<name>ARLY_SYNAS</name>
<comment type="catalytic activity">
    <reaction evidence="1">
        <text>2-(N(omega)-L-arginino)succinate = fumarate + L-arginine</text>
        <dbReference type="Rhea" id="RHEA:24020"/>
        <dbReference type="ChEBI" id="CHEBI:29806"/>
        <dbReference type="ChEBI" id="CHEBI:32682"/>
        <dbReference type="ChEBI" id="CHEBI:57472"/>
        <dbReference type="EC" id="4.3.2.1"/>
    </reaction>
</comment>
<comment type="pathway">
    <text evidence="1">Amino-acid biosynthesis; L-arginine biosynthesis; L-arginine from L-ornithine and carbamoyl phosphate: step 3/3.</text>
</comment>
<comment type="subcellular location">
    <subcellularLocation>
        <location evidence="1">Cytoplasm</location>
    </subcellularLocation>
</comment>
<comment type="similarity">
    <text evidence="1">Belongs to the lyase 1 family. Argininosuccinate lyase subfamily.</text>
</comment>
<keyword id="KW-0028">Amino-acid biosynthesis</keyword>
<keyword id="KW-0055">Arginine biosynthesis</keyword>
<keyword id="KW-0963">Cytoplasm</keyword>
<keyword id="KW-0456">Lyase</keyword>
<keyword id="KW-1185">Reference proteome</keyword>
<reference key="1">
    <citation type="journal article" date="2007" name="Proc. Natl. Acad. Sci. U.S.A.">
        <title>The genome of Syntrophus aciditrophicus: life at the thermodynamic limit of microbial growth.</title>
        <authorList>
            <person name="McInerney M.J."/>
            <person name="Rohlin L."/>
            <person name="Mouttaki H."/>
            <person name="Kim U."/>
            <person name="Krupp R.S."/>
            <person name="Rios-Hernandez L."/>
            <person name="Sieber J."/>
            <person name="Struchtemeyer C.G."/>
            <person name="Bhattacharyya A."/>
            <person name="Campbell J.W."/>
            <person name="Gunsalus R.P."/>
        </authorList>
    </citation>
    <scope>NUCLEOTIDE SEQUENCE [LARGE SCALE GENOMIC DNA]</scope>
    <source>
        <strain>SB</strain>
    </source>
</reference>
<organism>
    <name type="scientific">Syntrophus aciditrophicus (strain SB)</name>
    <dbReference type="NCBI Taxonomy" id="56780"/>
    <lineage>
        <taxon>Bacteria</taxon>
        <taxon>Pseudomonadati</taxon>
        <taxon>Thermodesulfobacteriota</taxon>
        <taxon>Syntrophia</taxon>
        <taxon>Syntrophales</taxon>
        <taxon>Syntrophaceae</taxon>
        <taxon>Syntrophus</taxon>
    </lineage>
</organism>
<feature type="chain" id="PRO_0000240784" description="Argininosuccinate lyase">
    <location>
        <begin position="1"/>
        <end position="472"/>
    </location>
</feature>
<proteinExistence type="inferred from homology"/>
<dbReference type="EC" id="4.3.2.1" evidence="1"/>
<dbReference type="EMBL" id="CP000252">
    <property type="protein sequence ID" value="ABC77309.1"/>
    <property type="molecule type" value="Genomic_DNA"/>
</dbReference>
<dbReference type="RefSeq" id="WP_011417331.1">
    <property type="nucleotide sequence ID" value="NC_007759.1"/>
</dbReference>
<dbReference type="SMR" id="Q2LT96"/>
<dbReference type="FunCoup" id="Q2LT96">
    <property type="interactions" value="428"/>
</dbReference>
<dbReference type="STRING" id="56780.SYN_02158"/>
<dbReference type="KEGG" id="sat:SYN_02158"/>
<dbReference type="eggNOG" id="COG0165">
    <property type="taxonomic scope" value="Bacteria"/>
</dbReference>
<dbReference type="HOGENOM" id="CLU_027272_2_3_7"/>
<dbReference type="InParanoid" id="Q2LT96"/>
<dbReference type="OrthoDB" id="9769623at2"/>
<dbReference type="UniPathway" id="UPA00068">
    <property type="reaction ID" value="UER00114"/>
</dbReference>
<dbReference type="Proteomes" id="UP000001933">
    <property type="component" value="Chromosome"/>
</dbReference>
<dbReference type="GO" id="GO:0005829">
    <property type="term" value="C:cytosol"/>
    <property type="evidence" value="ECO:0007669"/>
    <property type="project" value="TreeGrafter"/>
</dbReference>
<dbReference type="GO" id="GO:0004056">
    <property type="term" value="F:argininosuccinate lyase activity"/>
    <property type="evidence" value="ECO:0007669"/>
    <property type="project" value="UniProtKB-UniRule"/>
</dbReference>
<dbReference type="GO" id="GO:0042450">
    <property type="term" value="P:arginine biosynthetic process via ornithine"/>
    <property type="evidence" value="ECO:0007669"/>
    <property type="project" value="InterPro"/>
</dbReference>
<dbReference type="GO" id="GO:0006526">
    <property type="term" value="P:L-arginine biosynthetic process"/>
    <property type="evidence" value="ECO:0007669"/>
    <property type="project" value="UniProtKB-UniRule"/>
</dbReference>
<dbReference type="CDD" id="cd01359">
    <property type="entry name" value="Argininosuccinate_lyase"/>
    <property type="match status" value="1"/>
</dbReference>
<dbReference type="FunFam" id="1.10.275.10:FF:000002">
    <property type="entry name" value="Argininosuccinate lyase"/>
    <property type="match status" value="1"/>
</dbReference>
<dbReference type="FunFam" id="1.10.40.30:FF:000001">
    <property type="entry name" value="Argininosuccinate lyase"/>
    <property type="match status" value="1"/>
</dbReference>
<dbReference type="FunFam" id="1.20.200.10:FF:000002">
    <property type="entry name" value="Argininosuccinate lyase"/>
    <property type="match status" value="1"/>
</dbReference>
<dbReference type="Gene3D" id="1.10.40.30">
    <property type="entry name" value="Fumarase/aspartase (C-terminal domain)"/>
    <property type="match status" value="1"/>
</dbReference>
<dbReference type="Gene3D" id="1.20.200.10">
    <property type="entry name" value="Fumarase/aspartase (Central domain)"/>
    <property type="match status" value="1"/>
</dbReference>
<dbReference type="Gene3D" id="1.10.275.10">
    <property type="entry name" value="Fumarase/aspartase (N-terminal domain)"/>
    <property type="match status" value="1"/>
</dbReference>
<dbReference type="HAMAP" id="MF_00006">
    <property type="entry name" value="Arg_succ_lyase"/>
    <property type="match status" value="1"/>
</dbReference>
<dbReference type="InterPro" id="IPR029419">
    <property type="entry name" value="Arg_succ_lyase_C"/>
</dbReference>
<dbReference type="InterPro" id="IPR009049">
    <property type="entry name" value="Argininosuccinate_lyase"/>
</dbReference>
<dbReference type="InterPro" id="IPR024083">
    <property type="entry name" value="Fumarase/histidase_N"/>
</dbReference>
<dbReference type="InterPro" id="IPR020557">
    <property type="entry name" value="Fumarate_lyase_CS"/>
</dbReference>
<dbReference type="InterPro" id="IPR000362">
    <property type="entry name" value="Fumarate_lyase_fam"/>
</dbReference>
<dbReference type="InterPro" id="IPR022761">
    <property type="entry name" value="Fumarate_lyase_N"/>
</dbReference>
<dbReference type="InterPro" id="IPR008948">
    <property type="entry name" value="L-Aspartase-like"/>
</dbReference>
<dbReference type="NCBIfam" id="TIGR00838">
    <property type="entry name" value="argH"/>
    <property type="match status" value="1"/>
</dbReference>
<dbReference type="PANTHER" id="PTHR43814">
    <property type="entry name" value="ARGININOSUCCINATE LYASE"/>
    <property type="match status" value="1"/>
</dbReference>
<dbReference type="PANTHER" id="PTHR43814:SF1">
    <property type="entry name" value="ARGININOSUCCINATE LYASE"/>
    <property type="match status" value="1"/>
</dbReference>
<dbReference type="Pfam" id="PF14698">
    <property type="entry name" value="ASL_C2"/>
    <property type="match status" value="1"/>
</dbReference>
<dbReference type="Pfam" id="PF00206">
    <property type="entry name" value="Lyase_1"/>
    <property type="match status" value="1"/>
</dbReference>
<dbReference type="PRINTS" id="PR00145">
    <property type="entry name" value="ARGSUCLYASE"/>
</dbReference>
<dbReference type="PRINTS" id="PR00149">
    <property type="entry name" value="FUMRATELYASE"/>
</dbReference>
<dbReference type="SUPFAM" id="SSF48557">
    <property type="entry name" value="L-aspartase-like"/>
    <property type="match status" value="1"/>
</dbReference>
<dbReference type="PROSITE" id="PS00163">
    <property type="entry name" value="FUMARATE_LYASES"/>
    <property type="match status" value="1"/>
</dbReference>
<gene>
    <name evidence="1" type="primary">argH</name>
    <name type="ordered locus">SYNAS_14300</name>
    <name type="ORF">SYN_02158</name>
</gene>